<accession>Q1RLK6</accession>
<accession>E9QPF4</accession>
<accession>Q923H4</accession>
<organism>
    <name type="scientific">Mus musculus</name>
    <name type="common">Mouse</name>
    <dbReference type="NCBI Taxonomy" id="10090"/>
    <lineage>
        <taxon>Eukaryota</taxon>
        <taxon>Metazoa</taxon>
        <taxon>Chordata</taxon>
        <taxon>Craniata</taxon>
        <taxon>Vertebrata</taxon>
        <taxon>Euteleostomi</taxon>
        <taxon>Mammalia</taxon>
        <taxon>Eutheria</taxon>
        <taxon>Euarchontoglires</taxon>
        <taxon>Glires</taxon>
        <taxon>Rodentia</taxon>
        <taxon>Myomorpha</taxon>
        <taxon>Muroidea</taxon>
        <taxon>Muridae</taxon>
        <taxon>Murinae</taxon>
        <taxon>Mus</taxon>
        <taxon>Mus</taxon>
    </lineage>
</organism>
<gene>
    <name type="primary">B3gnt4</name>
</gene>
<reference key="1">
    <citation type="submission" date="2001-05" db="EMBL/GenBank/DDBJ databases">
        <title>Mouse beta1,3 N-acetylglucosaminyltransferase-4.</title>
        <authorList>
            <person name="Zhou D."/>
            <person name="Hennet T."/>
        </authorList>
    </citation>
    <scope>NUCLEOTIDE SEQUENCE [MRNA]</scope>
    <source>
        <strain>129/Sv</strain>
    </source>
</reference>
<reference key="2">
    <citation type="journal article" date="2009" name="PLoS Biol.">
        <title>Lineage-specific biology revealed by a finished genome assembly of the mouse.</title>
        <authorList>
            <person name="Church D.M."/>
            <person name="Goodstadt L."/>
            <person name="Hillier L.W."/>
            <person name="Zody M.C."/>
            <person name="Goldstein S."/>
            <person name="She X."/>
            <person name="Bult C.J."/>
            <person name="Agarwala R."/>
            <person name="Cherry J.L."/>
            <person name="DiCuccio M."/>
            <person name="Hlavina W."/>
            <person name="Kapustin Y."/>
            <person name="Meric P."/>
            <person name="Maglott D."/>
            <person name="Birtle Z."/>
            <person name="Marques A.C."/>
            <person name="Graves T."/>
            <person name="Zhou S."/>
            <person name="Teague B."/>
            <person name="Potamousis K."/>
            <person name="Churas C."/>
            <person name="Place M."/>
            <person name="Herschleb J."/>
            <person name="Runnheim R."/>
            <person name="Forrest D."/>
            <person name="Amos-Landgraf J."/>
            <person name="Schwartz D.C."/>
            <person name="Cheng Z."/>
            <person name="Lindblad-Toh K."/>
            <person name="Eichler E.E."/>
            <person name="Ponting C.P."/>
        </authorList>
    </citation>
    <scope>NUCLEOTIDE SEQUENCE [LARGE SCALE GENOMIC DNA]</scope>
    <source>
        <strain>C57BL/6J</strain>
    </source>
</reference>
<reference key="3">
    <citation type="journal article" date="2004" name="Genome Res.">
        <title>The status, quality, and expansion of the NIH full-length cDNA project: the Mammalian Gene Collection (MGC).</title>
        <authorList>
            <consortium name="The MGC Project Team"/>
        </authorList>
    </citation>
    <scope>NUCLEOTIDE SEQUENCE [LARGE SCALE MRNA]</scope>
</reference>
<proteinExistence type="evidence at transcript level"/>
<protein>
    <recommendedName>
        <fullName>N-acetyllactosaminide beta-1,3-N-acetylglucosaminyltransferase 4</fullName>
        <ecNumber evidence="2">2.4.1.149</ecNumber>
    </recommendedName>
    <alternativeName>
        <fullName>UDP-GlcNAc:betaGal beta-1,3-N-acetylglucosaminyltransferase 4</fullName>
        <shortName>BGnT-4</shortName>
        <shortName>Beta-1,3-Gn-T4</shortName>
        <shortName>Beta-1,3-N-acetylglucosaminyltransferase 4</shortName>
        <shortName>Beta3Gn-T4</shortName>
        <ecNumber>2.4.1.-</ecNumber>
    </alternativeName>
</protein>
<dbReference type="EC" id="2.4.1.149" evidence="2"/>
<dbReference type="EC" id="2.4.1.-"/>
<dbReference type="EMBL" id="AY037786">
    <property type="protein sequence ID" value="AAK68856.1"/>
    <property type="molecule type" value="mRNA"/>
</dbReference>
<dbReference type="EMBL" id="AC157931">
    <property type="status" value="NOT_ANNOTATED_CDS"/>
    <property type="molecule type" value="Genomic_DNA"/>
</dbReference>
<dbReference type="EMBL" id="BC114987">
    <property type="protein sequence ID" value="AAI14988.1"/>
    <property type="molecule type" value="mRNA"/>
</dbReference>
<dbReference type="EMBL" id="BC115755">
    <property type="protein sequence ID" value="AAI15756.1"/>
    <property type="molecule type" value="mRNA"/>
</dbReference>
<dbReference type="CCDS" id="CCDS19665.1"/>
<dbReference type="RefSeq" id="NP_001369783.1">
    <property type="nucleotide sequence ID" value="NM_001382854.1"/>
</dbReference>
<dbReference type="RefSeq" id="NP_941013.2">
    <property type="nucleotide sequence ID" value="NM_198611.2"/>
</dbReference>
<dbReference type="RefSeq" id="XP_006530374.1">
    <property type="nucleotide sequence ID" value="XM_006530311.3"/>
</dbReference>
<dbReference type="RefSeq" id="XP_006530376.1">
    <property type="nucleotide sequence ID" value="XM_006530313.5"/>
</dbReference>
<dbReference type="RefSeq" id="XP_011246502.1">
    <property type="nucleotide sequence ID" value="XM_011248200.3"/>
</dbReference>
<dbReference type="RefSeq" id="XP_036020986.1">
    <property type="nucleotide sequence ID" value="XM_036165093.1"/>
</dbReference>
<dbReference type="SMR" id="Q1RLK6"/>
<dbReference type="FunCoup" id="Q1RLK6">
    <property type="interactions" value="94"/>
</dbReference>
<dbReference type="STRING" id="10090.ENSMUSP00000031384"/>
<dbReference type="CAZy" id="GT31">
    <property type="family name" value="Glycosyltransferase Family 31"/>
</dbReference>
<dbReference type="GlyCosmos" id="Q1RLK6">
    <property type="glycosylation" value="2 sites, No reported glycans"/>
</dbReference>
<dbReference type="GlyGen" id="Q1RLK6">
    <property type="glycosylation" value="4 sites, 2 N-linked glycans (2 sites)"/>
</dbReference>
<dbReference type="PhosphoSitePlus" id="Q1RLK6"/>
<dbReference type="PaxDb" id="10090-ENSMUSP00000031384"/>
<dbReference type="Antibodypedia" id="31630">
    <property type="antibodies" value="90 antibodies from 20 providers"/>
</dbReference>
<dbReference type="DNASU" id="231727"/>
<dbReference type="Ensembl" id="ENSMUST00000031384.6">
    <property type="protein sequence ID" value="ENSMUSP00000031384.6"/>
    <property type="gene ID" value="ENSMUSG00000029431.6"/>
</dbReference>
<dbReference type="GeneID" id="231727"/>
<dbReference type="KEGG" id="mmu:231727"/>
<dbReference type="UCSC" id="uc008znw.1">
    <property type="organism name" value="mouse"/>
</dbReference>
<dbReference type="AGR" id="MGI:2680208"/>
<dbReference type="CTD" id="79369"/>
<dbReference type="MGI" id="MGI:2680208">
    <property type="gene designation" value="B3gnt4"/>
</dbReference>
<dbReference type="VEuPathDB" id="HostDB:ENSMUSG00000029431"/>
<dbReference type="eggNOG" id="KOG2287">
    <property type="taxonomic scope" value="Eukaryota"/>
</dbReference>
<dbReference type="GeneTree" id="ENSGT00940000162236"/>
<dbReference type="HOGENOM" id="CLU_036849_5_3_1"/>
<dbReference type="InParanoid" id="Q1RLK6"/>
<dbReference type="OMA" id="WDFAEDF"/>
<dbReference type="OrthoDB" id="2139606at2759"/>
<dbReference type="PhylomeDB" id="Q1RLK6"/>
<dbReference type="TreeFam" id="TF318639"/>
<dbReference type="Reactome" id="R-MMU-2022854">
    <property type="pathway name" value="Keratan sulfate biosynthesis"/>
</dbReference>
<dbReference type="Reactome" id="R-MMU-913709">
    <property type="pathway name" value="O-linked glycosylation of mucins"/>
</dbReference>
<dbReference type="UniPathway" id="UPA00378"/>
<dbReference type="BioGRID-ORCS" id="231727">
    <property type="hits" value="2 hits in 80 CRISPR screens"/>
</dbReference>
<dbReference type="ChiTaRS" id="B3gnt4">
    <property type="organism name" value="mouse"/>
</dbReference>
<dbReference type="PRO" id="PR:Q1RLK6"/>
<dbReference type="Proteomes" id="UP000000589">
    <property type="component" value="Chromosome 5"/>
</dbReference>
<dbReference type="RNAct" id="Q1RLK6">
    <property type="molecule type" value="protein"/>
</dbReference>
<dbReference type="Bgee" id="ENSMUSG00000029431">
    <property type="expression patterns" value="Expressed in animal zygote and 36 other cell types or tissues"/>
</dbReference>
<dbReference type="GO" id="GO:0000139">
    <property type="term" value="C:Golgi membrane"/>
    <property type="evidence" value="ECO:0007669"/>
    <property type="project" value="UniProtKB-SubCell"/>
</dbReference>
<dbReference type="GO" id="GO:0008532">
    <property type="term" value="F:N-acetyllactosaminide beta-1,3-N-acetylglucosaminyltransferase activity"/>
    <property type="evidence" value="ECO:0000250"/>
    <property type="project" value="UniProtKB"/>
</dbReference>
<dbReference type="GO" id="GO:0030311">
    <property type="term" value="P:poly-N-acetyllactosamine biosynthetic process"/>
    <property type="evidence" value="ECO:0000250"/>
    <property type="project" value="UniProtKB"/>
</dbReference>
<dbReference type="GO" id="GO:0006486">
    <property type="term" value="P:protein glycosylation"/>
    <property type="evidence" value="ECO:0007669"/>
    <property type="project" value="UniProtKB-UniPathway"/>
</dbReference>
<dbReference type="FunFam" id="3.90.550.50:FF:000009">
    <property type="entry name" value="Hexosyltransferase"/>
    <property type="match status" value="1"/>
</dbReference>
<dbReference type="Gene3D" id="3.90.550.50">
    <property type="match status" value="1"/>
</dbReference>
<dbReference type="InterPro" id="IPR002659">
    <property type="entry name" value="Glyco_trans_31"/>
</dbReference>
<dbReference type="PANTHER" id="PTHR11214">
    <property type="entry name" value="BETA-1,3-N-ACETYLGLUCOSAMINYLTRANSFERASE"/>
    <property type="match status" value="1"/>
</dbReference>
<dbReference type="PANTHER" id="PTHR11214:SF368">
    <property type="entry name" value="N-ACETYLLACTOSAMINIDE BETA-1,3-N-ACETYLGLUCOSAMINYLTRANSFERASE 4"/>
    <property type="match status" value="1"/>
</dbReference>
<dbReference type="Pfam" id="PF01762">
    <property type="entry name" value="Galactosyl_T"/>
    <property type="match status" value="1"/>
</dbReference>
<name>B3GN4_MOUSE</name>
<comment type="function">
    <text evidence="2">Beta-1,3-N-acetylglucosaminyltransferase involved in the synthesis of poly-N-acetyllactosamine. Has activity for type 2 oligosaccharides.</text>
</comment>
<comment type="catalytic activity">
    <reaction evidence="2">
        <text>a beta-D-galactosyl-(1-&gt;4)-N-acetyl-beta-D-glucosaminyl derivative + UDP-N-acetyl-alpha-D-glucosamine = an N-acetyl-beta-D-glucosaminyl-(1-&gt;3)-beta-D-galactosyl-(1-&gt;4)-N-acetyl-beta-D-glucosaminyl derivative + UDP + H(+)</text>
        <dbReference type="Rhea" id="RHEA:14389"/>
        <dbReference type="ChEBI" id="CHEBI:15378"/>
        <dbReference type="ChEBI" id="CHEBI:57705"/>
        <dbReference type="ChEBI" id="CHEBI:58223"/>
        <dbReference type="ChEBI" id="CHEBI:133507"/>
        <dbReference type="ChEBI" id="CHEBI:134090"/>
        <dbReference type="EC" id="2.4.1.149"/>
    </reaction>
</comment>
<comment type="pathway">
    <text>Protein modification; protein glycosylation.</text>
</comment>
<comment type="subcellular location">
    <subcellularLocation>
        <location evidence="1">Golgi apparatus membrane</location>
        <topology evidence="1">Single-pass type II membrane protein</topology>
    </subcellularLocation>
</comment>
<comment type="similarity">
    <text evidence="4">Belongs to the glycosyltransferase 31 family.</text>
</comment>
<sequence>MLPRLGCVLFCSLVVLLLSCLLLLKERIPAGSSKAHQQFLALPRSHHSQCSPNLTVVNTSLSLPSRHRLFLTYRHCRNFSILLEPSECARDTFLLLVIKSQPAHIEQRSAIRSTWGRAGSWARGRQLKLVFLLGVAGPVPPAQLLVYESWQFDDILQWDFAEDFFNLTLKELHVQRWIAAACTQAHFILKGDDDVFIHVPNVLEFLEGWDPAQDFLVGDVIRLARPNRNTKVKYFIPFSMYRARHYPPYAGGGGYVMSQATVRHLHMAMEEAELFPIDDVFVGMCLRKLGVTPIHHAGFKTFGIQQPLNPRDPCLYKGLLLVHRLSPLEMWTMWALVTDERLKCAATHKP</sequence>
<evidence type="ECO:0000250" key="1"/>
<evidence type="ECO:0000250" key="2">
    <source>
        <dbReference type="UniProtKB" id="Q9C0J1"/>
    </source>
</evidence>
<evidence type="ECO:0000255" key="3"/>
<evidence type="ECO:0000305" key="4"/>
<keyword id="KW-0325">Glycoprotein</keyword>
<keyword id="KW-0328">Glycosyltransferase</keyword>
<keyword id="KW-0333">Golgi apparatus</keyword>
<keyword id="KW-0472">Membrane</keyword>
<keyword id="KW-1185">Reference proteome</keyword>
<keyword id="KW-0735">Signal-anchor</keyword>
<keyword id="KW-0808">Transferase</keyword>
<keyword id="KW-0812">Transmembrane</keyword>
<keyword id="KW-1133">Transmembrane helix</keyword>
<feature type="chain" id="PRO_0000289208" description="N-acetyllactosaminide beta-1,3-N-acetylglucosaminyltransferase 4">
    <location>
        <begin position="1"/>
        <end position="350"/>
    </location>
</feature>
<feature type="topological domain" description="Cytoplasmic" evidence="3">
    <location>
        <begin position="1"/>
        <end position="4"/>
    </location>
</feature>
<feature type="transmembrane region" description="Helical; Signal-anchor for type II membrane protein" evidence="3">
    <location>
        <begin position="5"/>
        <end position="25"/>
    </location>
</feature>
<feature type="topological domain" description="Lumenal" evidence="3">
    <location>
        <begin position="26"/>
        <end position="350"/>
    </location>
</feature>
<feature type="glycosylation site" description="N-linked (GlcNAc...) asparagine" evidence="3">
    <location>
        <position position="53"/>
    </location>
</feature>
<feature type="glycosylation site" description="N-linked (GlcNAc...) asparagine" evidence="3">
    <location>
        <position position="166"/>
    </location>
</feature>
<feature type="sequence conflict" description="In Ref. 1; AAK68856 and 3; AAI14988/AAI15756." evidence="4" ref="1 3">
    <original>P</original>
    <variation>S</variation>
    <location>
        <position position="3"/>
    </location>
</feature>
<feature type="sequence conflict" description="In Ref. 1; AAK68856." evidence="4" ref="1">
    <original>M</original>
    <variation>R</variation>
    <location>
        <position position="267"/>
    </location>
</feature>
<feature type="sequence conflict" description="In Ref. 3; AAI14988/AAI15756." evidence="4" ref="3">
    <original>M</original>
    <variation>T</variation>
    <location>
        <position position="267"/>
    </location>
</feature>